<organism>
    <name type="scientific">Streptomyces avermitilis (strain ATCC 31267 / DSM 46492 / JCM 5070 / NBRC 14893 / NCIMB 12804 / NRRL 8165 / MA-4680)</name>
    <dbReference type="NCBI Taxonomy" id="227882"/>
    <lineage>
        <taxon>Bacteria</taxon>
        <taxon>Bacillati</taxon>
        <taxon>Actinomycetota</taxon>
        <taxon>Actinomycetes</taxon>
        <taxon>Kitasatosporales</taxon>
        <taxon>Streptomycetaceae</taxon>
        <taxon>Streptomyces</taxon>
    </lineage>
</organism>
<evidence type="ECO:0000255" key="1">
    <source>
        <dbReference type="HAMAP-Rule" id="MF_00001"/>
    </source>
</evidence>
<keyword id="KW-0665">Pyrimidine biosynthesis</keyword>
<keyword id="KW-1185">Reference proteome</keyword>
<keyword id="KW-0808">Transferase</keyword>
<sequence length="325" mass="35588">MQRHLISAADLTRDDAVHLLDTAEEMARVADRPIKKLPTLRGRTVVNLFFEDSTRTRISFEAAEKRLSADVINFTAKGSSVSKGESLKDTAQTLEAMGVDAVVIRHGASGAPYRLATSGWIDAVVINAGDGTHQHPTQALLDAFTMRRRLVGRDAGLGRDLAGKRITLVGDILHSRVARSNVDLLHTLGAEVTLVAPPTLLPVGIESWPCEVAYDLDSTLPKSDAVMMLRVQRERMNAAFFPTEREYSRRYGLNGDRMAKMPEHAIVMHPGPMVRGMEITAEVADSDRCTAIEQVTNGVSIRMAVLYLLLGGNEPAVSHTRIEEK</sequence>
<name>PYRB_STRAW</name>
<protein>
    <recommendedName>
        <fullName evidence="1">Aspartate carbamoyltransferase catalytic subunit</fullName>
        <ecNumber evidence="1">2.1.3.2</ecNumber>
    </recommendedName>
    <alternativeName>
        <fullName evidence="1">Aspartate transcarbamylase</fullName>
        <shortName evidence="1">ATCase</shortName>
    </alternativeName>
</protein>
<gene>
    <name evidence="1" type="primary">pyrB</name>
    <name type="ordered locus">SAV_6863</name>
</gene>
<dbReference type="EC" id="2.1.3.2" evidence="1"/>
<dbReference type="EMBL" id="BA000030">
    <property type="protein sequence ID" value="BAC74574.1"/>
    <property type="molecule type" value="Genomic_DNA"/>
</dbReference>
<dbReference type="RefSeq" id="WP_010988261.1">
    <property type="nucleotide sequence ID" value="NZ_JZJK01000082.1"/>
</dbReference>
<dbReference type="SMR" id="Q827R1"/>
<dbReference type="GeneID" id="41543938"/>
<dbReference type="KEGG" id="sma:SAVERM_6863"/>
<dbReference type="eggNOG" id="COG0540">
    <property type="taxonomic scope" value="Bacteria"/>
</dbReference>
<dbReference type="HOGENOM" id="CLU_043846_2_0_11"/>
<dbReference type="OrthoDB" id="9774690at2"/>
<dbReference type="UniPathway" id="UPA00070">
    <property type="reaction ID" value="UER00116"/>
</dbReference>
<dbReference type="Proteomes" id="UP000000428">
    <property type="component" value="Chromosome"/>
</dbReference>
<dbReference type="GO" id="GO:0005829">
    <property type="term" value="C:cytosol"/>
    <property type="evidence" value="ECO:0007669"/>
    <property type="project" value="TreeGrafter"/>
</dbReference>
<dbReference type="GO" id="GO:0016597">
    <property type="term" value="F:amino acid binding"/>
    <property type="evidence" value="ECO:0007669"/>
    <property type="project" value="InterPro"/>
</dbReference>
<dbReference type="GO" id="GO:0004070">
    <property type="term" value="F:aspartate carbamoyltransferase activity"/>
    <property type="evidence" value="ECO:0007669"/>
    <property type="project" value="UniProtKB-UniRule"/>
</dbReference>
<dbReference type="GO" id="GO:0006207">
    <property type="term" value="P:'de novo' pyrimidine nucleobase biosynthetic process"/>
    <property type="evidence" value="ECO:0007669"/>
    <property type="project" value="InterPro"/>
</dbReference>
<dbReference type="GO" id="GO:0044205">
    <property type="term" value="P:'de novo' UMP biosynthetic process"/>
    <property type="evidence" value="ECO:0007669"/>
    <property type="project" value="UniProtKB-UniRule"/>
</dbReference>
<dbReference type="GO" id="GO:0006520">
    <property type="term" value="P:amino acid metabolic process"/>
    <property type="evidence" value="ECO:0007669"/>
    <property type="project" value="InterPro"/>
</dbReference>
<dbReference type="FunFam" id="3.40.50.1370:FF:000007">
    <property type="entry name" value="Aspartate carbamoyltransferase"/>
    <property type="match status" value="1"/>
</dbReference>
<dbReference type="FunFam" id="3.40.50.1370:FF:000012">
    <property type="entry name" value="Aspartate carbamoyltransferase"/>
    <property type="match status" value="1"/>
</dbReference>
<dbReference type="Gene3D" id="3.40.50.1370">
    <property type="entry name" value="Aspartate/ornithine carbamoyltransferase"/>
    <property type="match status" value="2"/>
</dbReference>
<dbReference type="HAMAP" id="MF_00001">
    <property type="entry name" value="Asp_carb_tr"/>
    <property type="match status" value="1"/>
</dbReference>
<dbReference type="InterPro" id="IPR006132">
    <property type="entry name" value="Asp/Orn_carbamoyltranf_P-bd"/>
</dbReference>
<dbReference type="InterPro" id="IPR006130">
    <property type="entry name" value="Asp/Orn_carbamoylTrfase"/>
</dbReference>
<dbReference type="InterPro" id="IPR036901">
    <property type="entry name" value="Asp/Orn_carbamoylTrfase_sf"/>
</dbReference>
<dbReference type="InterPro" id="IPR002082">
    <property type="entry name" value="Asp_carbamoyltransf"/>
</dbReference>
<dbReference type="InterPro" id="IPR006131">
    <property type="entry name" value="Asp_carbamoyltransf_Asp/Orn-bd"/>
</dbReference>
<dbReference type="NCBIfam" id="TIGR00670">
    <property type="entry name" value="asp_carb_tr"/>
    <property type="match status" value="1"/>
</dbReference>
<dbReference type="NCBIfam" id="NF002032">
    <property type="entry name" value="PRK00856.1"/>
    <property type="match status" value="1"/>
</dbReference>
<dbReference type="PANTHER" id="PTHR45753:SF6">
    <property type="entry name" value="ASPARTATE CARBAMOYLTRANSFERASE"/>
    <property type="match status" value="1"/>
</dbReference>
<dbReference type="PANTHER" id="PTHR45753">
    <property type="entry name" value="ORNITHINE CARBAMOYLTRANSFERASE, MITOCHONDRIAL"/>
    <property type="match status" value="1"/>
</dbReference>
<dbReference type="Pfam" id="PF00185">
    <property type="entry name" value="OTCace"/>
    <property type="match status" value="1"/>
</dbReference>
<dbReference type="Pfam" id="PF02729">
    <property type="entry name" value="OTCace_N"/>
    <property type="match status" value="1"/>
</dbReference>
<dbReference type="PRINTS" id="PR00100">
    <property type="entry name" value="AOTCASE"/>
</dbReference>
<dbReference type="PRINTS" id="PR00101">
    <property type="entry name" value="ATCASE"/>
</dbReference>
<dbReference type="SUPFAM" id="SSF53671">
    <property type="entry name" value="Aspartate/ornithine carbamoyltransferase"/>
    <property type="match status" value="1"/>
</dbReference>
<dbReference type="PROSITE" id="PS00097">
    <property type="entry name" value="CARBAMOYLTRANSFERASE"/>
    <property type="match status" value="1"/>
</dbReference>
<accession>Q827R1</accession>
<comment type="function">
    <text evidence="1">Catalyzes the condensation of carbamoyl phosphate and aspartate to form carbamoyl aspartate and inorganic phosphate, the committed step in the de novo pyrimidine nucleotide biosynthesis pathway.</text>
</comment>
<comment type="catalytic activity">
    <reaction evidence="1">
        <text>carbamoyl phosphate + L-aspartate = N-carbamoyl-L-aspartate + phosphate + H(+)</text>
        <dbReference type="Rhea" id="RHEA:20013"/>
        <dbReference type="ChEBI" id="CHEBI:15378"/>
        <dbReference type="ChEBI" id="CHEBI:29991"/>
        <dbReference type="ChEBI" id="CHEBI:32814"/>
        <dbReference type="ChEBI" id="CHEBI:43474"/>
        <dbReference type="ChEBI" id="CHEBI:58228"/>
        <dbReference type="EC" id="2.1.3.2"/>
    </reaction>
</comment>
<comment type="pathway">
    <text evidence="1">Pyrimidine metabolism; UMP biosynthesis via de novo pathway; (S)-dihydroorotate from bicarbonate: step 2/3.</text>
</comment>
<comment type="subunit">
    <text evidence="1">Heterododecamer (2C3:3R2) of six catalytic PyrB chains organized as two trimers (C3), and six regulatory PyrI chains organized as three dimers (R2).</text>
</comment>
<comment type="similarity">
    <text evidence="1">Belongs to the aspartate/ornithine carbamoyltransferase superfamily. ATCase family.</text>
</comment>
<feature type="chain" id="PRO_0000113203" description="Aspartate carbamoyltransferase catalytic subunit">
    <location>
        <begin position="1"/>
        <end position="325"/>
    </location>
</feature>
<feature type="binding site" evidence="1">
    <location>
        <position position="55"/>
    </location>
    <ligand>
        <name>carbamoyl phosphate</name>
        <dbReference type="ChEBI" id="CHEBI:58228"/>
    </ligand>
</feature>
<feature type="binding site" evidence="1">
    <location>
        <position position="56"/>
    </location>
    <ligand>
        <name>carbamoyl phosphate</name>
        <dbReference type="ChEBI" id="CHEBI:58228"/>
    </ligand>
</feature>
<feature type="binding site" evidence="1">
    <location>
        <position position="83"/>
    </location>
    <ligand>
        <name>L-aspartate</name>
        <dbReference type="ChEBI" id="CHEBI:29991"/>
    </ligand>
</feature>
<feature type="binding site" evidence="1">
    <location>
        <position position="105"/>
    </location>
    <ligand>
        <name>carbamoyl phosphate</name>
        <dbReference type="ChEBI" id="CHEBI:58228"/>
    </ligand>
</feature>
<feature type="binding site" evidence="1">
    <location>
        <position position="135"/>
    </location>
    <ligand>
        <name>carbamoyl phosphate</name>
        <dbReference type="ChEBI" id="CHEBI:58228"/>
    </ligand>
</feature>
<feature type="binding site" evidence="1">
    <location>
        <position position="138"/>
    </location>
    <ligand>
        <name>carbamoyl phosphate</name>
        <dbReference type="ChEBI" id="CHEBI:58228"/>
    </ligand>
</feature>
<feature type="binding site" evidence="1">
    <location>
        <position position="176"/>
    </location>
    <ligand>
        <name>L-aspartate</name>
        <dbReference type="ChEBI" id="CHEBI:29991"/>
    </ligand>
</feature>
<feature type="binding site" evidence="1">
    <location>
        <position position="230"/>
    </location>
    <ligand>
        <name>L-aspartate</name>
        <dbReference type="ChEBI" id="CHEBI:29991"/>
    </ligand>
</feature>
<feature type="binding site" evidence="1">
    <location>
        <position position="271"/>
    </location>
    <ligand>
        <name>carbamoyl phosphate</name>
        <dbReference type="ChEBI" id="CHEBI:58228"/>
    </ligand>
</feature>
<feature type="binding site" evidence="1">
    <location>
        <position position="272"/>
    </location>
    <ligand>
        <name>carbamoyl phosphate</name>
        <dbReference type="ChEBI" id="CHEBI:58228"/>
    </ligand>
</feature>
<proteinExistence type="inferred from homology"/>
<reference key="1">
    <citation type="journal article" date="2001" name="Proc. Natl. Acad. Sci. U.S.A.">
        <title>Genome sequence of an industrial microorganism Streptomyces avermitilis: deducing the ability of producing secondary metabolites.</title>
        <authorList>
            <person name="Omura S."/>
            <person name="Ikeda H."/>
            <person name="Ishikawa J."/>
            <person name="Hanamoto A."/>
            <person name="Takahashi C."/>
            <person name="Shinose M."/>
            <person name="Takahashi Y."/>
            <person name="Horikawa H."/>
            <person name="Nakazawa H."/>
            <person name="Osonoe T."/>
            <person name="Kikuchi H."/>
            <person name="Shiba T."/>
            <person name="Sakaki Y."/>
            <person name="Hattori M."/>
        </authorList>
    </citation>
    <scope>NUCLEOTIDE SEQUENCE [LARGE SCALE GENOMIC DNA]</scope>
    <source>
        <strain>ATCC 31267 / DSM 46492 / JCM 5070 / NBRC 14893 / NCIMB 12804 / NRRL 8165 / MA-4680</strain>
    </source>
</reference>
<reference key="2">
    <citation type="journal article" date="2003" name="Nat. Biotechnol.">
        <title>Complete genome sequence and comparative analysis of the industrial microorganism Streptomyces avermitilis.</title>
        <authorList>
            <person name="Ikeda H."/>
            <person name="Ishikawa J."/>
            <person name="Hanamoto A."/>
            <person name="Shinose M."/>
            <person name="Kikuchi H."/>
            <person name="Shiba T."/>
            <person name="Sakaki Y."/>
            <person name="Hattori M."/>
            <person name="Omura S."/>
        </authorList>
    </citation>
    <scope>NUCLEOTIDE SEQUENCE [LARGE SCALE GENOMIC DNA]</scope>
    <source>
        <strain>ATCC 31267 / DSM 46492 / JCM 5070 / NBRC 14893 / NCIMB 12804 / NRRL 8165 / MA-4680</strain>
    </source>
</reference>